<evidence type="ECO:0000255" key="1">
    <source>
        <dbReference type="HAMAP-Rule" id="MF_01294"/>
    </source>
</evidence>
<organism>
    <name type="scientific">Salmonella paratyphi A (strain AKU_12601)</name>
    <dbReference type="NCBI Taxonomy" id="554290"/>
    <lineage>
        <taxon>Bacteria</taxon>
        <taxon>Pseudomonadati</taxon>
        <taxon>Pseudomonadota</taxon>
        <taxon>Gammaproteobacteria</taxon>
        <taxon>Enterobacterales</taxon>
        <taxon>Enterobacteriaceae</taxon>
        <taxon>Salmonella</taxon>
    </lineage>
</organism>
<accession>B5BGG5</accession>
<dbReference type="EC" id="4.1.2.40" evidence="1"/>
<dbReference type="EMBL" id="FM200053">
    <property type="protein sequence ID" value="CAR61162.1"/>
    <property type="molecule type" value="Genomic_DNA"/>
</dbReference>
<dbReference type="RefSeq" id="WP_000469983.1">
    <property type="nucleotide sequence ID" value="NC_011147.1"/>
</dbReference>
<dbReference type="SMR" id="B5BGG5"/>
<dbReference type="KEGG" id="sek:SSPA2914"/>
<dbReference type="HOGENOM" id="CLU_040088_0_1_6"/>
<dbReference type="UniPathway" id="UPA00704">
    <property type="reaction ID" value="UER00716"/>
</dbReference>
<dbReference type="Proteomes" id="UP000001869">
    <property type="component" value="Chromosome"/>
</dbReference>
<dbReference type="GO" id="GO:0005829">
    <property type="term" value="C:cytosol"/>
    <property type="evidence" value="ECO:0007669"/>
    <property type="project" value="TreeGrafter"/>
</dbReference>
<dbReference type="GO" id="GO:0009025">
    <property type="term" value="F:tagatose-bisphosphate aldolase activity"/>
    <property type="evidence" value="ECO:0007669"/>
    <property type="project" value="UniProtKB-UniRule"/>
</dbReference>
<dbReference type="GO" id="GO:0008270">
    <property type="term" value="F:zinc ion binding"/>
    <property type="evidence" value="ECO:0007669"/>
    <property type="project" value="UniProtKB-UniRule"/>
</dbReference>
<dbReference type="GO" id="GO:2001059">
    <property type="term" value="P:D-tagatose 6-phosphate catabolic process"/>
    <property type="evidence" value="ECO:0007669"/>
    <property type="project" value="UniProtKB-UniRule"/>
</dbReference>
<dbReference type="GO" id="GO:0019404">
    <property type="term" value="P:galactitol catabolic process"/>
    <property type="evidence" value="ECO:0007669"/>
    <property type="project" value="InterPro"/>
</dbReference>
<dbReference type="CDD" id="cd00947">
    <property type="entry name" value="TBP_aldolase_IIB"/>
    <property type="match status" value="1"/>
</dbReference>
<dbReference type="FunFam" id="3.20.20.70:FF:000043">
    <property type="entry name" value="D-tagatose-1,6-bisphosphate aldolase subunit GatY"/>
    <property type="match status" value="1"/>
</dbReference>
<dbReference type="Gene3D" id="3.20.20.70">
    <property type="entry name" value="Aldolase class I"/>
    <property type="match status" value="1"/>
</dbReference>
<dbReference type="HAMAP" id="MF_01294">
    <property type="entry name" value="TagBP_aldolase_GatY"/>
    <property type="match status" value="1"/>
</dbReference>
<dbReference type="InterPro" id="IPR013785">
    <property type="entry name" value="Aldolase_TIM"/>
</dbReference>
<dbReference type="InterPro" id="IPR050246">
    <property type="entry name" value="Class_II_FBP_aldolase"/>
</dbReference>
<dbReference type="InterPro" id="IPR000771">
    <property type="entry name" value="FBA_II"/>
</dbReference>
<dbReference type="InterPro" id="IPR011288">
    <property type="entry name" value="TagBP_ald_KbaY/GatY"/>
</dbReference>
<dbReference type="InterPro" id="IPR023955">
    <property type="entry name" value="TagBP_aldolase_GatY"/>
</dbReference>
<dbReference type="NCBIfam" id="TIGR00167">
    <property type="entry name" value="cbbA"/>
    <property type="match status" value="1"/>
</dbReference>
<dbReference type="NCBIfam" id="NF006626">
    <property type="entry name" value="PRK09195.1"/>
    <property type="match status" value="1"/>
</dbReference>
<dbReference type="NCBIfam" id="NF009374">
    <property type="entry name" value="PRK12737.1"/>
    <property type="match status" value="1"/>
</dbReference>
<dbReference type="NCBIfam" id="TIGR01858">
    <property type="entry name" value="tag_bisphos_ald"/>
    <property type="match status" value="1"/>
</dbReference>
<dbReference type="PANTHER" id="PTHR30304">
    <property type="entry name" value="D-TAGATOSE-1,6-BISPHOSPHATE ALDOLASE"/>
    <property type="match status" value="1"/>
</dbReference>
<dbReference type="PANTHER" id="PTHR30304:SF0">
    <property type="entry name" value="D-TAGATOSE-1,6-BISPHOSPHATE ALDOLASE SUBUNIT GATY-RELATED"/>
    <property type="match status" value="1"/>
</dbReference>
<dbReference type="Pfam" id="PF01116">
    <property type="entry name" value="F_bP_aldolase"/>
    <property type="match status" value="1"/>
</dbReference>
<dbReference type="PIRSF" id="PIRSF001359">
    <property type="entry name" value="F_bP_aldolase_II"/>
    <property type="match status" value="1"/>
</dbReference>
<dbReference type="SUPFAM" id="SSF51569">
    <property type="entry name" value="Aldolase"/>
    <property type="match status" value="1"/>
</dbReference>
<dbReference type="PROSITE" id="PS00602">
    <property type="entry name" value="ALDOLASE_CLASS_II_1"/>
    <property type="match status" value="1"/>
</dbReference>
<dbReference type="PROSITE" id="PS00806">
    <property type="entry name" value="ALDOLASE_CLASS_II_2"/>
    <property type="match status" value="1"/>
</dbReference>
<sequence length="284" mass="30969">MFIISSKNMLQKAQHAGYAVPAFNIHNLETLQVVVETAAEMRSPLIVAGTPGTFSYAGMGNIVAIAGDLAREYNLPLAIHLDHHESLADIESKVMAGIRSVMIDGSHFPFEENVALVKSVVDFCHRYDTSVEAELGRLGGIEDDLVVDSKDALYTNPQQAREFVARTGIDSLAVAIGTAHCMYAAEPKLDFERLAEIRALVDIPLVLHGASGLPESDIRQAISLGVCKVNVATELKIAFSDALKEYFLQNPKANDPRHYMQPAKQAMKEVVRKVIHVCGCEGQL</sequence>
<reference key="1">
    <citation type="journal article" date="2009" name="BMC Genomics">
        <title>Pseudogene accumulation in the evolutionary histories of Salmonella enterica serovars Paratyphi A and Typhi.</title>
        <authorList>
            <person name="Holt K.E."/>
            <person name="Thomson N.R."/>
            <person name="Wain J."/>
            <person name="Langridge G.C."/>
            <person name="Hasan R."/>
            <person name="Bhutta Z.A."/>
            <person name="Quail M.A."/>
            <person name="Norbertczak H."/>
            <person name="Walker D."/>
            <person name="Simmonds M."/>
            <person name="White B."/>
            <person name="Bason N."/>
            <person name="Mungall K."/>
            <person name="Dougan G."/>
            <person name="Parkhill J."/>
        </authorList>
    </citation>
    <scope>NUCLEOTIDE SEQUENCE [LARGE SCALE GENOMIC DNA]</scope>
    <source>
        <strain>AKU_12601</strain>
    </source>
</reference>
<proteinExistence type="inferred from homology"/>
<name>GATY_SALPK</name>
<comment type="function">
    <text evidence="1">Catalytic subunit of the tagatose-1,6-bisphosphate aldolase GatYZ, which catalyzes the reversible aldol condensation of dihydroxyacetone phosphate (DHAP or glycerone-phosphate) with glyceraldehyde 3-phosphate (G3P) to produce tagatose 1,6-bisphosphate (TBP). Requires GatZ subunit for full activity and stability. Is involved in the catabolism of galactitol.</text>
</comment>
<comment type="catalytic activity">
    <reaction evidence="1">
        <text>D-tagatofuranose 1,6-bisphosphate = D-glyceraldehyde 3-phosphate + dihydroxyacetone phosphate</text>
        <dbReference type="Rhea" id="RHEA:22948"/>
        <dbReference type="ChEBI" id="CHEBI:57642"/>
        <dbReference type="ChEBI" id="CHEBI:58694"/>
        <dbReference type="ChEBI" id="CHEBI:59776"/>
        <dbReference type="EC" id="4.1.2.40"/>
    </reaction>
</comment>
<comment type="cofactor">
    <cofactor evidence="1">
        <name>Zn(2+)</name>
        <dbReference type="ChEBI" id="CHEBI:29105"/>
    </cofactor>
    <text evidence="1">Binds 1 zinc ion per subunit.</text>
</comment>
<comment type="pathway">
    <text evidence="1">Carbohydrate metabolism; D-tagatose 6-phosphate degradation; D-glyceraldehyde 3-phosphate and glycerone phosphate from D-tagatose 6-phosphate: step 2/2.</text>
</comment>
<comment type="subunit">
    <text evidence="1">Forms a complex with GatZ.</text>
</comment>
<comment type="similarity">
    <text evidence="1">Belongs to the class II fructose-bisphosphate aldolase family. TagBP aldolase GatY subfamily.</text>
</comment>
<protein>
    <recommendedName>
        <fullName evidence="1">D-tagatose-1,6-bisphosphate aldolase subunit GatY</fullName>
        <shortName evidence="1">TBPA</shortName>
        <shortName evidence="1">TagBP aldolase</shortName>
        <ecNumber evidence="1">4.1.2.40</ecNumber>
    </recommendedName>
    <alternativeName>
        <fullName evidence="1">D-tagatose-bisphosphate aldolase class II</fullName>
    </alternativeName>
    <alternativeName>
        <fullName evidence="1">Tagatose-bisphosphate aldolase</fullName>
    </alternativeName>
</protein>
<feature type="chain" id="PRO_0000355347" description="D-tagatose-1,6-bisphosphate aldolase subunit GatY">
    <location>
        <begin position="1"/>
        <end position="284"/>
    </location>
</feature>
<feature type="active site" description="Proton donor" evidence="1">
    <location>
        <position position="82"/>
    </location>
</feature>
<feature type="binding site" evidence="1">
    <location>
        <position position="83"/>
    </location>
    <ligand>
        <name>Zn(2+)</name>
        <dbReference type="ChEBI" id="CHEBI:29105"/>
        <note>catalytic</note>
    </ligand>
</feature>
<feature type="binding site" evidence="1">
    <location>
        <position position="180"/>
    </location>
    <ligand>
        <name>Zn(2+)</name>
        <dbReference type="ChEBI" id="CHEBI:29105"/>
        <note>catalytic</note>
    </ligand>
</feature>
<feature type="binding site" evidence="1">
    <location>
        <position position="181"/>
    </location>
    <ligand>
        <name>dihydroxyacetone phosphate</name>
        <dbReference type="ChEBI" id="CHEBI:57642"/>
    </ligand>
</feature>
<feature type="binding site" evidence="1">
    <location>
        <position position="208"/>
    </location>
    <ligand>
        <name>Zn(2+)</name>
        <dbReference type="ChEBI" id="CHEBI:29105"/>
        <note>catalytic</note>
    </ligand>
</feature>
<feature type="binding site" evidence="1">
    <location>
        <begin position="209"/>
        <end position="211"/>
    </location>
    <ligand>
        <name>dihydroxyacetone phosphate</name>
        <dbReference type="ChEBI" id="CHEBI:57642"/>
    </ligand>
</feature>
<feature type="binding site" evidence="1">
    <location>
        <begin position="230"/>
        <end position="233"/>
    </location>
    <ligand>
        <name>dihydroxyacetone phosphate</name>
        <dbReference type="ChEBI" id="CHEBI:57642"/>
    </ligand>
</feature>
<gene>
    <name evidence="1" type="primary">gatY</name>
    <name type="ordered locus">SSPA2914</name>
</gene>
<keyword id="KW-0298">Galactitol metabolism</keyword>
<keyword id="KW-0456">Lyase</keyword>
<keyword id="KW-0479">Metal-binding</keyword>
<keyword id="KW-0862">Zinc</keyword>